<sequence>MSQPLTVDCPTCGAPVEWTAANLNRPFCSDRCKLIDLGAWAAEEHKIPVAPDAEDELFSEDLPPRH</sequence>
<evidence type="ECO:0000255" key="1">
    <source>
        <dbReference type="HAMAP-Rule" id="MF_00649"/>
    </source>
</evidence>
<feature type="chain" id="PRO_1000212401" description="DNA gyrase inhibitor YacG">
    <location>
        <begin position="1"/>
        <end position="66"/>
    </location>
</feature>
<feature type="binding site" evidence="1">
    <location>
        <position position="9"/>
    </location>
    <ligand>
        <name>Zn(2+)</name>
        <dbReference type="ChEBI" id="CHEBI:29105"/>
    </ligand>
</feature>
<feature type="binding site" evidence="1">
    <location>
        <position position="12"/>
    </location>
    <ligand>
        <name>Zn(2+)</name>
        <dbReference type="ChEBI" id="CHEBI:29105"/>
    </ligand>
</feature>
<feature type="binding site" evidence="1">
    <location>
        <position position="28"/>
    </location>
    <ligand>
        <name>Zn(2+)</name>
        <dbReference type="ChEBI" id="CHEBI:29105"/>
    </ligand>
</feature>
<feature type="binding site" evidence="1">
    <location>
        <position position="32"/>
    </location>
    <ligand>
        <name>Zn(2+)</name>
        <dbReference type="ChEBI" id="CHEBI:29105"/>
    </ligand>
</feature>
<keyword id="KW-0479">Metal-binding</keyword>
<keyword id="KW-0862">Zinc</keyword>
<protein>
    <recommendedName>
        <fullName evidence="1">DNA gyrase inhibitor YacG</fullName>
    </recommendedName>
</protein>
<reference key="1">
    <citation type="journal article" date="2009" name="Genome Biol.">
        <title>Genomic and genetic analyses of diversity and plant interactions of Pseudomonas fluorescens.</title>
        <authorList>
            <person name="Silby M.W."/>
            <person name="Cerdeno-Tarraga A.M."/>
            <person name="Vernikos G.S."/>
            <person name="Giddens S.R."/>
            <person name="Jackson R.W."/>
            <person name="Preston G.M."/>
            <person name="Zhang X.-X."/>
            <person name="Moon C.D."/>
            <person name="Gehrig S.M."/>
            <person name="Godfrey S.A.C."/>
            <person name="Knight C.G."/>
            <person name="Malone J.G."/>
            <person name="Robinson Z."/>
            <person name="Spiers A.J."/>
            <person name="Harris S."/>
            <person name="Challis G.L."/>
            <person name="Yaxley A.M."/>
            <person name="Harris D."/>
            <person name="Seeger K."/>
            <person name="Murphy L."/>
            <person name="Rutter S."/>
            <person name="Squares R."/>
            <person name="Quail M.A."/>
            <person name="Saunders E."/>
            <person name="Mavromatis K."/>
            <person name="Brettin T.S."/>
            <person name="Bentley S.D."/>
            <person name="Hothersall J."/>
            <person name="Stephens E."/>
            <person name="Thomas C.M."/>
            <person name="Parkhill J."/>
            <person name="Levy S.B."/>
            <person name="Rainey P.B."/>
            <person name="Thomson N.R."/>
        </authorList>
    </citation>
    <scope>NUCLEOTIDE SEQUENCE [LARGE SCALE GENOMIC DNA]</scope>
    <source>
        <strain>SBW25</strain>
    </source>
</reference>
<organism>
    <name type="scientific">Pseudomonas fluorescens (strain SBW25)</name>
    <dbReference type="NCBI Taxonomy" id="216595"/>
    <lineage>
        <taxon>Bacteria</taxon>
        <taxon>Pseudomonadati</taxon>
        <taxon>Pseudomonadota</taxon>
        <taxon>Gammaproteobacteria</taxon>
        <taxon>Pseudomonadales</taxon>
        <taxon>Pseudomonadaceae</taxon>
        <taxon>Pseudomonas</taxon>
    </lineage>
</organism>
<name>YACG_PSEFS</name>
<gene>
    <name evidence="1" type="primary">yacG</name>
    <name type="ordered locus">PFLU_0788</name>
</gene>
<accession>C3KE92</accession>
<dbReference type="EMBL" id="AM181176">
    <property type="protein sequence ID" value="CAY47057.1"/>
    <property type="molecule type" value="Genomic_DNA"/>
</dbReference>
<dbReference type="RefSeq" id="WP_012722157.1">
    <property type="nucleotide sequence ID" value="NC_012660.1"/>
</dbReference>
<dbReference type="SMR" id="C3KE92"/>
<dbReference type="STRING" id="294.SRM1_04871"/>
<dbReference type="PATRIC" id="fig|216595.4.peg.1025"/>
<dbReference type="eggNOG" id="COG3024">
    <property type="taxonomic scope" value="Bacteria"/>
</dbReference>
<dbReference type="HOGENOM" id="CLU_178280_3_2_6"/>
<dbReference type="OrthoDB" id="9809663at2"/>
<dbReference type="GO" id="GO:0008657">
    <property type="term" value="F:DNA topoisomerase type II (double strand cut, ATP-hydrolyzing) inhibitor activity"/>
    <property type="evidence" value="ECO:0007669"/>
    <property type="project" value="UniProtKB-UniRule"/>
</dbReference>
<dbReference type="GO" id="GO:0008270">
    <property type="term" value="F:zinc ion binding"/>
    <property type="evidence" value="ECO:0007669"/>
    <property type="project" value="UniProtKB-UniRule"/>
</dbReference>
<dbReference type="GO" id="GO:0006355">
    <property type="term" value="P:regulation of DNA-templated transcription"/>
    <property type="evidence" value="ECO:0007669"/>
    <property type="project" value="InterPro"/>
</dbReference>
<dbReference type="Gene3D" id="3.30.50.10">
    <property type="entry name" value="Erythroid Transcription Factor GATA-1, subunit A"/>
    <property type="match status" value="1"/>
</dbReference>
<dbReference type="HAMAP" id="MF_00649">
    <property type="entry name" value="DNA_gyrase_inhibitor_YacG"/>
    <property type="match status" value="1"/>
</dbReference>
<dbReference type="InterPro" id="IPR005584">
    <property type="entry name" value="DNA_gyrase_inhibitor_YacG"/>
</dbReference>
<dbReference type="InterPro" id="IPR013088">
    <property type="entry name" value="Znf_NHR/GATA"/>
</dbReference>
<dbReference type="NCBIfam" id="NF001638">
    <property type="entry name" value="PRK00418.1"/>
    <property type="match status" value="1"/>
</dbReference>
<dbReference type="PANTHER" id="PTHR36150">
    <property type="entry name" value="DNA GYRASE INHIBITOR YACG"/>
    <property type="match status" value="1"/>
</dbReference>
<dbReference type="PANTHER" id="PTHR36150:SF1">
    <property type="entry name" value="DNA GYRASE INHIBITOR YACG"/>
    <property type="match status" value="1"/>
</dbReference>
<dbReference type="Pfam" id="PF03884">
    <property type="entry name" value="YacG"/>
    <property type="match status" value="1"/>
</dbReference>
<dbReference type="SUPFAM" id="SSF57716">
    <property type="entry name" value="Glucocorticoid receptor-like (DNA-binding domain)"/>
    <property type="match status" value="1"/>
</dbReference>
<proteinExistence type="inferred from homology"/>
<comment type="function">
    <text evidence="1">Inhibits all the catalytic activities of DNA gyrase by preventing its interaction with DNA. Acts by binding directly to the C-terminal domain of GyrB, which probably disrupts DNA binding by the gyrase.</text>
</comment>
<comment type="cofactor">
    <cofactor evidence="1">
        <name>Zn(2+)</name>
        <dbReference type="ChEBI" id="CHEBI:29105"/>
    </cofactor>
    <text evidence="1">Binds 1 zinc ion.</text>
</comment>
<comment type="subunit">
    <text evidence="1">Interacts with GyrB.</text>
</comment>
<comment type="similarity">
    <text evidence="1">Belongs to the DNA gyrase inhibitor YacG family.</text>
</comment>